<dbReference type="EMBL" id="AL590446">
    <property type="protein sequence ID" value="CAD25472.2"/>
    <property type="molecule type" value="Genomic_DNA"/>
</dbReference>
<dbReference type="RefSeq" id="NP_585868.1">
    <property type="nucleotide sequence ID" value="NM_001041490.1"/>
</dbReference>
<dbReference type="PDB" id="7QEP">
    <property type="method" value="EM"/>
    <property type="resolution" value="2.70 A"/>
    <property type="chains" value="O6=1-94"/>
</dbReference>
<dbReference type="PDBsum" id="7QEP"/>
<dbReference type="EMDB" id="EMD-13936"/>
<dbReference type="SMR" id="Q8SRP1"/>
<dbReference type="FunCoup" id="Q8SRP1">
    <property type="interactions" value="157"/>
</dbReference>
<dbReference type="STRING" id="284813.Q8SRP1"/>
<dbReference type="GeneID" id="859293"/>
<dbReference type="KEGG" id="ecu:ECU06_1120"/>
<dbReference type="VEuPathDB" id="MicrosporidiaDB:ECU06_1120"/>
<dbReference type="HOGENOM" id="CLU_140672_1_1_1"/>
<dbReference type="InParanoid" id="Q8SRP1"/>
<dbReference type="OrthoDB" id="9616667at2759"/>
<dbReference type="Proteomes" id="UP000000819">
    <property type="component" value="Chromosome VI"/>
</dbReference>
<dbReference type="GO" id="GO:0005737">
    <property type="term" value="C:cytoplasm"/>
    <property type="evidence" value="ECO:0007669"/>
    <property type="project" value="UniProtKB-SubCell"/>
</dbReference>
<dbReference type="GO" id="GO:1990904">
    <property type="term" value="C:ribonucleoprotein complex"/>
    <property type="evidence" value="ECO:0007669"/>
    <property type="project" value="UniProtKB-KW"/>
</dbReference>
<dbReference type="GO" id="GO:0005840">
    <property type="term" value="C:ribosome"/>
    <property type="evidence" value="ECO:0007669"/>
    <property type="project" value="UniProtKB-KW"/>
</dbReference>
<dbReference type="GO" id="GO:0003735">
    <property type="term" value="F:structural constituent of ribosome"/>
    <property type="evidence" value="ECO:0007669"/>
    <property type="project" value="InterPro"/>
</dbReference>
<dbReference type="GO" id="GO:0006412">
    <property type="term" value="P:translation"/>
    <property type="evidence" value="ECO:0007669"/>
    <property type="project" value="InterPro"/>
</dbReference>
<dbReference type="Gene3D" id="1.10.10.1760">
    <property type="entry name" value="60S ribosomal protein L36"/>
    <property type="match status" value="1"/>
</dbReference>
<dbReference type="InterPro" id="IPR000509">
    <property type="entry name" value="Ribosomal_eL36"/>
</dbReference>
<dbReference type="InterPro" id="IPR038097">
    <property type="entry name" value="Ribosomal_eL36_sf"/>
</dbReference>
<dbReference type="Pfam" id="PF01158">
    <property type="entry name" value="Ribosomal_L36e"/>
    <property type="match status" value="1"/>
</dbReference>
<keyword id="KW-0002">3D-structure</keyword>
<keyword id="KW-0963">Cytoplasm</keyword>
<keyword id="KW-1185">Reference proteome</keyword>
<keyword id="KW-0687">Ribonucleoprotein</keyword>
<keyword id="KW-0689">Ribosomal protein</keyword>
<accession>Q8SRP1</accession>
<organism>
    <name type="scientific">Encephalitozoon cuniculi (strain GB-M1)</name>
    <name type="common">Microsporidian parasite</name>
    <dbReference type="NCBI Taxonomy" id="284813"/>
    <lineage>
        <taxon>Eukaryota</taxon>
        <taxon>Fungi</taxon>
        <taxon>Fungi incertae sedis</taxon>
        <taxon>Microsporidia</taxon>
        <taxon>Unikaryonidae</taxon>
        <taxon>Encephalitozoon</taxon>
    </lineage>
</organism>
<name>RL36_ENCCU</name>
<proteinExistence type="evidence at protein level"/>
<feature type="chain" id="PRO_0000383125" description="Large ribosomal subunit protein eL36">
    <location>
        <begin position="1"/>
        <end position="94"/>
    </location>
</feature>
<feature type="region of interest" description="Disordered" evidence="2">
    <location>
        <begin position="1"/>
        <end position="30"/>
    </location>
</feature>
<feature type="compositionally biased region" description="Basic residues" evidence="2">
    <location>
        <begin position="1"/>
        <end position="25"/>
    </location>
</feature>
<comment type="subunit">
    <text evidence="1">Component of the large ribosomal subunit.</text>
</comment>
<comment type="subcellular location">
    <subcellularLocation>
        <location evidence="1">Cytoplasm</location>
    </subcellularLocation>
</comment>
<comment type="developmental stage">
    <text evidence="3">Expressed in late sporogonial stages.</text>
</comment>
<comment type="similarity">
    <text evidence="4">Belongs to the eukaryotic ribosomal protein eL36 family.</text>
</comment>
<reference key="1">
    <citation type="journal article" date="2001" name="Nature">
        <title>Genome sequence and gene compaction of the eukaryote parasite Encephalitozoon cuniculi.</title>
        <authorList>
            <person name="Katinka M.D."/>
            <person name="Duprat S."/>
            <person name="Cornillot E."/>
            <person name="Metenier G."/>
            <person name="Thomarat F."/>
            <person name="Prensier G."/>
            <person name="Barbe V."/>
            <person name="Peyretaillade E."/>
            <person name="Brottier P."/>
            <person name="Wincker P."/>
            <person name="Delbac F."/>
            <person name="El Alaoui H."/>
            <person name="Peyret P."/>
            <person name="Saurin W."/>
            <person name="Gouy M."/>
            <person name="Weissenbach J."/>
            <person name="Vivares C.P."/>
        </authorList>
    </citation>
    <scope>NUCLEOTIDE SEQUENCE [LARGE SCALE GENOMIC DNA]</scope>
    <source>
        <strain>GB-M1</strain>
    </source>
</reference>
<reference key="2">
    <citation type="journal article" date="2009" name="BMC Genomics">
        <title>Identification of transcriptional signals in Encephalitozoon cuniculi widespread among Microsporidia phylum: support for accurate structural genome annotation.</title>
        <authorList>
            <person name="Peyretaillade E."/>
            <person name="Goncalves O."/>
            <person name="Terrat S."/>
            <person name="Dugat-Bony E."/>
            <person name="Wincker P."/>
            <person name="Cornman R.S."/>
            <person name="Evans J.D."/>
            <person name="Delbac F."/>
            <person name="Peyret P."/>
        </authorList>
    </citation>
    <scope>GENOME REANNOTATION</scope>
    <source>
        <strain>GB-M1</strain>
    </source>
</reference>
<reference key="3">
    <citation type="journal article" date="2006" name="Proteomics">
        <title>Proteomic analysis of the eukaryotic parasite Encephalitozoon cuniculi (microsporidia): a reference map for proteins expressed in late sporogonial stages.</title>
        <authorList>
            <person name="Brosson D."/>
            <person name="Kuhn L."/>
            <person name="Delbac F."/>
            <person name="Garin J."/>
            <person name="Vivares C.P."/>
            <person name="Texier C."/>
        </authorList>
    </citation>
    <scope>IDENTIFICATION BY MASS SPECTROMETRY [LARGE SCALE ANALYSIS]</scope>
    <scope>DEVELOPMENTAL STAGE</scope>
</reference>
<sequence length="94" mass="10749">MKNAYKKVRVRYPVKRPDVKRKQRGPRAETQESRFLAAAVADEISGLSPLEKKAISLLEAKNNNKAQKLLRKRLGSHKRAVAKVEKLARMLLEK</sequence>
<protein>
    <recommendedName>
        <fullName evidence="4">Large ribosomal subunit protein eL36</fullName>
    </recommendedName>
    <alternativeName>
        <fullName>60S ribosomal protein L36</fullName>
    </alternativeName>
    <alternativeName>
        <fullName>L39</fullName>
    </alternativeName>
</protein>
<evidence type="ECO:0000250" key="1"/>
<evidence type="ECO:0000256" key="2">
    <source>
        <dbReference type="SAM" id="MobiDB-lite"/>
    </source>
</evidence>
<evidence type="ECO:0000269" key="3">
    <source>
    </source>
</evidence>
<evidence type="ECO:0000305" key="4"/>
<gene>
    <name type="primary">RPL36</name>
    <name type="ordered locus">ECU06_1120</name>
</gene>